<gene>
    <name type="primary">Rabep2</name>
    <name type="synonym">Rabpt5b</name>
</gene>
<sequence>MAAAPATLALDPQPQEKQKDASESSELSRLRAELAGALAEMETMKAVAEVSESTKAEAVAAVQRQCQEEVASLQAILKDSISSYETQIAALKQERQQQQQDFEEKDRELGHLKQLLARAHPLDSLEKQMEKAHEDSEKLREIVLPMEQEITELKGKLQRAEELIQEIQRRPRQPASLHGSTELLPLSRNPSPPLEPLEEPSGDAGPAAEAFAHNCDDSASISSFSLGGAAGSASLRGPQGLSPEQEETASLVSTGTLVPEGIFLPPPGYQLVPDSQWEQLQVEGRQLQKELESVSRERDELQEGLRRSNEDCAKQMQVLLAQVQNSEQLLRTLQGTVSQAQERVQLQMAELATSHKCLSQEVKRLNEENQGLRAEQLPSSALQGSEQREDQDEALPSSIQELHLLVQNTRQQARARQQAQEHEAERLRIEIVKLREALDEETAAKASLERQLRVQREETDVLEASLCSLRIETERVQQEQRKAQLTDLLSEQRAKTLRLQAELETSEQVQRDFVRLSQALQVRLERIRQAETLQQVRSILDEAPLRDIRDIKDS</sequence>
<accession>Q91WG2</accession>
<accession>Q3UMK8</accession>
<accession>Q99KN3</accession>
<evidence type="ECO:0000250" key="1">
    <source>
        <dbReference type="UniProtKB" id="Q62835"/>
    </source>
</evidence>
<evidence type="ECO:0000250" key="2">
    <source>
        <dbReference type="UniProtKB" id="Q9H5N1"/>
    </source>
</evidence>
<evidence type="ECO:0000255" key="3"/>
<evidence type="ECO:0000256" key="4">
    <source>
        <dbReference type="SAM" id="MobiDB-lite"/>
    </source>
</evidence>
<evidence type="ECO:0000303" key="5">
    <source>
    </source>
</evidence>
<evidence type="ECO:0000305" key="6"/>
<name>RABE2_MOUSE</name>
<organism>
    <name type="scientific">Mus musculus</name>
    <name type="common">Mouse</name>
    <dbReference type="NCBI Taxonomy" id="10090"/>
    <lineage>
        <taxon>Eukaryota</taxon>
        <taxon>Metazoa</taxon>
        <taxon>Chordata</taxon>
        <taxon>Craniata</taxon>
        <taxon>Vertebrata</taxon>
        <taxon>Euteleostomi</taxon>
        <taxon>Mammalia</taxon>
        <taxon>Eutheria</taxon>
        <taxon>Euarchontoglires</taxon>
        <taxon>Glires</taxon>
        <taxon>Rodentia</taxon>
        <taxon>Myomorpha</taxon>
        <taxon>Muroidea</taxon>
        <taxon>Muridae</taxon>
        <taxon>Murinae</taxon>
        <taxon>Mus</taxon>
        <taxon>Mus</taxon>
    </lineage>
</organism>
<comment type="function">
    <text evidence="2">Plays a role in membrane trafficking and in homotypic early endosome fusion. Participates in arteriogenesis by regulating vascular endothelial growth factor receptor 2/VEGFR2 cell surface expression and endosomal trafficking. By interacting with SDCCAG8, localizes to centrosomes and plays a critical role in ciliogenesis.</text>
</comment>
<comment type="subunit">
    <text evidence="2">Heterodimer with RABGEF1. The dimer binds RAB5A that has been activated by GTP-binding. Interacts with SDCCAG8; this interaction is important for ciliogenesis regulation. Interacts with RAB4A; this interaction may mediate VEGFR2 cell surface expression.</text>
</comment>
<comment type="subcellular location">
    <subcellularLocation>
        <location evidence="2">Cytoplasm</location>
    </subcellularLocation>
    <subcellularLocation>
        <location evidence="2">Early endosome</location>
    </subcellularLocation>
    <subcellularLocation>
        <location evidence="2">Cytoplasm</location>
        <location evidence="2">Cytoskeleton</location>
        <location evidence="2">Microtubule organizing center</location>
        <location evidence="2">Centrosome</location>
    </subcellularLocation>
    <subcellularLocation>
        <location evidence="2">Cytoplasm</location>
        <location evidence="2">Cytoskeleton</location>
        <location evidence="2">Cilium basal body</location>
    </subcellularLocation>
</comment>
<comment type="alternative products">
    <event type="alternative splicing"/>
    <isoform>
        <id>Q91WG2-3</id>
        <name>1</name>
        <sequence type="displayed"/>
    </isoform>
    <isoform>
        <id>Q91WG2-1</id>
        <name>2</name>
        <sequence type="described" ref="VSP_010460"/>
    </isoform>
    <isoform>
        <id>Q91WG2-2</id>
        <name>3</name>
        <sequence type="described" ref="VSP_010461"/>
    </isoform>
</comment>
<comment type="similarity">
    <text evidence="6">Belongs to the rabaptin family.</text>
</comment>
<reference key="1">
    <citation type="journal article" date="2005" name="Science">
        <title>The transcriptional landscape of the mammalian genome.</title>
        <authorList>
            <person name="Carninci P."/>
            <person name="Kasukawa T."/>
            <person name="Katayama S."/>
            <person name="Gough J."/>
            <person name="Frith M.C."/>
            <person name="Maeda N."/>
            <person name="Oyama R."/>
            <person name="Ravasi T."/>
            <person name="Lenhard B."/>
            <person name="Wells C."/>
            <person name="Kodzius R."/>
            <person name="Shimokawa K."/>
            <person name="Bajic V.B."/>
            <person name="Brenner S.E."/>
            <person name="Batalov S."/>
            <person name="Forrest A.R."/>
            <person name="Zavolan M."/>
            <person name="Davis M.J."/>
            <person name="Wilming L.G."/>
            <person name="Aidinis V."/>
            <person name="Allen J.E."/>
            <person name="Ambesi-Impiombato A."/>
            <person name="Apweiler R."/>
            <person name="Aturaliya R.N."/>
            <person name="Bailey T.L."/>
            <person name="Bansal M."/>
            <person name="Baxter L."/>
            <person name="Beisel K.W."/>
            <person name="Bersano T."/>
            <person name="Bono H."/>
            <person name="Chalk A.M."/>
            <person name="Chiu K.P."/>
            <person name="Choudhary V."/>
            <person name="Christoffels A."/>
            <person name="Clutterbuck D.R."/>
            <person name="Crowe M.L."/>
            <person name="Dalla E."/>
            <person name="Dalrymple B.P."/>
            <person name="de Bono B."/>
            <person name="Della Gatta G."/>
            <person name="di Bernardo D."/>
            <person name="Down T."/>
            <person name="Engstrom P."/>
            <person name="Fagiolini M."/>
            <person name="Faulkner G."/>
            <person name="Fletcher C.F."/>
            <person name="Fukushima T."/>
            <person name="Furuno M."/>
            <person name="Futaki S."/>
            <person name="Gariboldi M."/>
            <person name="Georgii-Hemming P."/>
            <person name="Gingeras T.R."/>
            <person name="Gojobori T."/>
            <person name="Green R.E."/>
            <person name="Gustincich S."/>
            <person name="Harbers M."/>
            <person name="Hayashi Y."/>
            <person name="Hensch T.K."/>
            <person name="Hirokawa N."/>
            <person name="Hill D."/>
            <person name="Huminiecki L."/>
            <person name="Iacono M."/>
            <person name="Ikeo K."/>
            <person name="Iwama A."/>
            <person name="Ishikawa T."/>
            <person name="Jakt M."/>
            <person name="Kanapin A."/>
            <person name="Katoh M."/>
            <person name="Kawasawa Y."/>
            <person name="Kelso J."/>
            <person name="Kitamura H."/>
            <person name="Kitano H."/>
            <person name="Kollias G."/>
            <person name="Krishnan S.P."/>
            <person name="Kruger A."/>
            <person name="Kummerfeld S.K."/>
            <person name="Kurochkin I.V."/>
            <person name="Lareau L.F."/>
            <person name="Lazarevic D."/>
            <person name="Lipovich L."/>
            <person name="Liu J."/>
            <person name="Liuni S."/>
            <person name="McWilliam S."/>
            <person name="Madan Babu M."/>
            <person name="Madera M."/>
            <person name="Marchionni L."/>
            <person name="Matsuda H."/>
            <person name="Matsuzawa S."/>
            <person name="Miki H."/>
            <person name="Mignone F."/>
            <person name="Miyake S."/>
            <person name="Morris K."/>
            <person name="Mottagui-Tabar S."/>
            <person name="Mulder N."/>
            <person name="Nakano N."/>
            <person name="Nakauchi H."/>
            <person name="Ng P."/>
            <person name="Nilsson R."/>
            <person name="Nishiguchi S."/>
            <person name="Nishikawa S."/>
            <person name="Nori F."/>
            <person name="Ohara O."/>
            <person name="Okazaki Y."/>
            <person name="Orlando V."/>
            <person name="Pang K.C."/>
            <person name="Pavan W.J."/>
            <person name="Pavesi G."/>
            <person name="Pesole G."/>
            <person name="Petrovsky N."/>
            <person name="Piazza S."/>
            <person name="Reed J."/>
            <person name="Reid J.F."/>
            <person name="Ring B.Z."/>
            <person name="Ringwald M."/>
            <person name="Rost B."/>
            <person name="Ruan Y."/>
            <person name="Salzberg S.L."/>
            <person name="Sandelin A."/>
            <person name="Schneider C."/>
            <person name="Schoenbach C."/>
            <person name="Sekiguchi K."/>
            <person name="Semple C.A."/>
            <person name="Seno S."/>
            <person name="Sessa L."/>
            <person name="Sheng Y."/>
            <person name="Shibata Y."/>
            <person name="Shimada H."/>
            <person name="Shimada K."/>
            <person name="Silva D."/>
            <person name="Sinclair B."/>
            <person name="Sperling S."/>
            <person name="Stupka E."/>
            <person name="Sugiura K."/>
            <person name="Sultana R."/>
            <person name="Takenaka Y."/>
            <person name="Taki K."/>
            <person name="Tammoja K."/>
            <person name="Tan S.L."/>
            <person name="Tang S."/>
            <person name="Taylor M.S."/>
            <person name="Tegner J."/>
            <person name="Teichmann S.A."/>
            <person name="Ueda H.R."/>
            <person name="van Nimwegen E."/>
            <person name="Verardo R."/>
            <person name="Wei C.L."/>
            <person name="Yagi K."/>
            <person name="Yamanishi H."/>
            <person name="Zabarovsky E."/>
            <person name="Zhu S."/>
            <person name="Zimmer A."/>
            <person name="Hide W."/>
            <person name="Bult C."/>
            <person name="Grimmond S.M."/>
            <person name="Teasdale R.D."/>
            <person name="Liu E.T."/>
            <person name="Brusic V."/>
            <person name="Quackenbush J."/>
            <person name="Wahlestedt C."/>
            <person name="Mattick J.S."/>
            <person name="Hume D.A."/>
            <person name="Kai C."/>
            <person name="Sasaki D."/>
            <person name="Tomaru Y."/>
            <person name="Fukuda S."/>
            <person name="Kanamori-Katayama M."/>
            <person name="Suzuki M."/>
            <person name="Aoki J."/>
            <person name="Arakawa T."/>
            <person name="Iida J."/>
            <person name="Imamura K."/>
            <person name="Itoh M."/>
            <person name="Kato T."/>
            <person name="Kawaji H."/>
            <person name="Kawagashira N."/>
            <person name="Kawashima T."/>
            <person name="Kojima M."/>
            <person name="Kondo S."/>
            <person name="Konno H."/>
            <person name="Nakano K."/>
            <person name="Ninomiya N."/>
            <person name="Nishio T."/>
            <person name="Okada M."/>
            <person name="Plessy C."/>
            <person name="Shibata K."/>
            <person name="Shiraki T."/>
            <person name="Suzuki S."/>
            <person name="Tagami M."/>
            <person name="Waki K."/>
            <person name="Watahiki A."/>
            <person name="Okamura-Oho Y."/>
            <person name="Suzuki H."/>
            <person name="Kawai J."/>
            <person name="Hayashizaki Y."/>
        </authorList>
    </citation>
    <scope>NUCLEOTIDE SEQUENCE [LARGE SCALE MRNA] (ISOFORM 1)</scope>
    <source>
        <tissue>Lung</tissue>
    </source>
</reference>
<reference key="2">
    <citation type="journal article" date="2004" name="Genome Res.">
        <title>The status, quality, and expansion of the NIH full-length cDNA project: the Mammalian Gene Collection (MGC).</title>
        <authorList>
            <consortium name="The MGC Project Team"/>
        </authorList>
    </citation>
    <scope>NUCLEOTIDE SEQUENCE [LARGE SCALE MRNA] (ISOFORMS 2 AND 3)</scope>
    <source>
        <tissue>Kidney</tissue>
    </source>
</reference>
<reference key="3">
    <citation type="journal article" date="2010" name="Cell">
        <title>A tissue-specific atlas of mouse protein phosphorylation and expression.</title>
        <authorList>
            <person name="Huttlin E.L."/>
            <person name="Jedrychowski M.P."/>
            <person name="Elias J.E."/>
            <person name="Goswami T."/>
            <person name="Rad R."/>
            <person name="Beausoleil S.A."/>
            <person name="Villen J."/>
            <person name="Haas W."/>
            <person name="Sowa M.E."/>
            <person name="Gygi S.P."/>
        </authorList>
    </citation>
    <scope>IDENTIFICATION BY MASS SPECTROMETRY [LARGE SCALE ANALYSIS]</scope>
    <source>
        <tissue>Kidney</tissue>
        <tissue>Liver</tissue>
        <tissue>Lung</tissue>
        <tissue>Pancreas</tissue>
        <tissue>Spleen</tissue>
        <tissue>Testis</tissue>
    </source>
</reference>
<dbReference type="EMBL" id="AK144836">
    <property type="protein sequence ID" value="BAE26090.1"/>
    <property type="molecule type" value="mRNA"/>
</dbReference>
<dbReference type="EMBL" id="BC004088">
    <property type="protein sequence ID" value="AAH04088.1"/>
    <property type="molecule type" value="mRNA"/>
</dbReference>
<dbReference type="EMBL" id="BC015287">
    <property type="protein sequence ID" value="AAH15287.1"/>
    <property type="molecule type" value="mRNA"/>
</dbReference>
<dbReference type="CCDS" id="CCDS21829.2">
    <molecule id="Q91WG2-3"/>
</dbReference>
<dbReference type="RefSeq" id="NP_085043.2">
    <molecule id="Q91WG2-3"/>
    <property type="nucleotide sequence ID" value="NM_030566.2"/>
</dbReference>
<dbReference type="SMR" id="Q91WG2"/>
<dbReference type="BioGRID" id="213981">
    <property type="interactions" value="9"/>
</dbReference>
<dbReference type="FunCoup" id="Q91WG2">
    <property type="interactions" value="911"/>
</dbReference>
<dbReference type="IntAct" id="Q91WG2">
    <property type="interactions" value="5"/>
</dbReference>
<dbReference type="STRING" id="10090.ENSMUSP00000102015"/>
<dbReference type="GlyGen" id="Q91WG2">
    <property type="glycosylation" value="1 site, 1 O-linked glycan (1 site)"/>
</dbReference>
<dbReference type="iPTMnet" id="Q91WG2"/>
<dbReference type="PhosphoSitePlus" id="Q91WG2"/>
<dbReference type="jPOST" id="Q91WG2"/>
<dbReference type="PaxDb" id="10090-ENSMUSP00000102015"/>
<dbReference type="PeptideAtlas" id="Q91WG2"/>
<dbReference type="ProteomicsDB" id="300384">
    <molecule id="Q91WG2-3"/>
</dbReference>
<dbReference type="ProteomicsDB" id="300385">
    <molecule id="Q91WG2-1"/>
</dbReference>
<dbReference type="ProteomicsDB" id="300386">
    <molecule id="Q91WG2-2"/>
</dbReference>
<dbReference type="Pumba" id="Q91WG2"/>
<dbReference type="Antibodypedia" id="26625">
    <property type="antibodies" value="124 antibodies from 26 providers"/>
</dbReference>
<dbReference type="Ensembl" id="ENSMUST00000106405.2">
    <molecule id="Q91WG2-1"/>
    <property type="protein sequence ID" value="ENSMUSP00000102013.2"/>
    <property type="gene ID" value="ENSMUSG00000030727.13"/>
</dbReference>
<dbReference type="Ensembl" id="ENSMUST00000106407.9">
    <molecule id="Q91WG2-3"/>
    <property type="protein sequence ID" value="ENSMUSP00000102015.3"/>
    <property type="gene ID" value="ENSMUSG00000030727.13"/>
</dbReference>
<dbReference type="GeneID" id="70314"/>
<dbReference type="KEGG" id="mmu:70314"/>
<dbReference type="UCSC" id="uc009jrd.1">
    <molecule id="Q91WG2-3"/>
    <property type="organism name" value="mouse"/>
</dbReference>
<dbReference type="AGR" id="MGI:1917564"/>
<dbReference type="CTD" id="79874"/>
<dbReference type="MGI" id="MGI:1917564">
    <property type="gene designation" value="Rabep2"/>
</dbReference>
<dbReference type="VEuPathDB" id="HostDB:ENSMUSG00000030727"/>
<dbReference type="eggNOG" id="KOG0993">
    <property type="taxonomic scope" value="Eukaryota"/>
</dbReference>
<dbReference type="GeneTree" id="ENSGT00530000063743"/>
<dbReference type="HOGENOM" id="CLU_035043_0_0_1"/>
<dbReference type="InParanoid" id="Q91WG2"/>
<dbReference type="OMA" id="EMMHSIV"/>
<dbReference type="OrthoDB" id="79940at2759"/>
<dbReference type="PhylomeDB" id="Q91WG2"/>
<dbReference type="TreeFam" id="TF329365"/>
<dbReference type="BioGRID-ORCS" id="70314">
    <property type="hits" value="3 hits in 77 CRISPR screens"/>
</dbReference>
<dbReference type="ChiTaRS" id="Rabep2">
    <property type="organism name" value="mouse"/>
</dbReference>
<dbReference type="PRO" id="PR:Q91WG2"/>
<dbReference type="Proteomes" id="UP000000589">
    <property type="component" value="Chromosome 7"/>
</dbReference>
<dbReference type="RNAct" id="Q91WG2">
    <property type="molecule type" value="protein"/>
</dbReference>
<dbReference type="Bgee" id="ENSMUSG00000030727">
    <property type="expression patterns" value="Expressed in lacrimal gland and 229 other cell types or tissues"/>
</dbReference>
<dbReference type="ExpressionAtlas" id="Q91WG2">
    <property type="expression patterns" value="baseline and differential"/>
</dbReference>
<dbReference type="GO" id="GO:0005813">
    <property type="term" value="C:centrosome"/>
    <property type="evidence" value="ECO:0007669"/>
    <property type="project" value="UniProtKB-SubCell"/>
</dbReference>
<dbReference type="GO" id="GO:0036064">
    <property type="term" value="C:ciliary basal body"/>
    <property type="evidence" value="ECO:0007669"/>
    <property type="project" value="Ensembl"/>
</dbReference>
<dbReference type="GO" id="GO:0005829">
    <property type="term" value="C:cytosol"/>
    <property type="evidence" value="ECO:0007669"/>
    <property type="project" value="Ensembl"/>
</dbReference>
<dbReference type="GO" id="GO:0005769">
    <property type="term" value="C:early endosome"/>
    <property type="evidence" value="ECO:0007669"/>
    <property type="project" value="UniProtKB-SubCell"/>
</dbReference>
<dbReference type="GO" id="GO:0005794">
    <property type="term" value="C:Golgi apparatus"/>
    <property type="evidence" value="ECO:0007669"/>
    <property type="project" value="Ensembl"/>
</dbReference>
<dbReference type="GO" id="GO:0008083">
    <property type="term" value="F:growth factor activity"/>
    <property type="evidence" value="ECO:0007669"/>
    <property type="project" value="InterPro"/>
</dbReference>
<dbReference type="GO" id="GO:0005096">
    <property type="term" value="F:GTPase activator activity"/>
    <property type="evidence" value="ECO:0007669"/>
    <property type="project" value="InterPro"/>
</dbReference>
<dbReference type="GO" id="GO:0030030">
    <property type="term" value="P:cell projection organization"/>
    <property type="evidence" value="ECO:0007669"/>
    <property type="project" value="UniProtKB-KW"/>
</dbReference>
<dbReference type="GO" id="GO:0006897">
    <property type="term" value="P:endocytosis"/>
    <property type="evidence" value="ECO:0007669"/>
    <property type="project" value="UniProtKB-KW"/>
</dbReference>
<dbReference type="GO" id="GO:0015031">
    <property type="term" value="P:protein transport"/>
    <property type="evidence" value="ECO:0007669"/>
    <property type="project" value="UniProtKB-KW"/>
</dbReference>
<dbReference type="GO" id="GO:1902017">
    <property type="term" value="P:regulation of cilium assembly"/>
    <property type="evidence" value="ECO:0007669"/>
    <property type="project" value="Ensembl"/>
</dbReference>
<dbReference type="FunFam" id="1.20.5.340:FF:000028">
    <property type="entry name" value="rab GTPase-binding effector protein 2 isoform X1"/>
    <property type="match status" value="1"/>
</dbReference>
<dbReference type="FunFam" id="1.20.5.730:FF:000003">
    <property type="entry name" value="rab GTPase-binding effector protein 2 isoform X1"/>
    <property type="match status" value="1"/>
</dbReference>
<dbReference type="Gene3D" id="1.20.5.340">
    <property type="match status" value="1"/>
</dbReference>
<dbReference type="Gene3D" id="1.20.5.730">
    <property type="entry name" value="Single helix bin"/>
    <property type="match status" value="1"/>
</dbReference>
<dbReference type="InterPro" id="IPR003914">
    <property type="entry name" value="Rabaptin"/>
</dbReference>
<dbReference type="InterPro" id="IPR018514">
    <property type="entry name" value="Rabaptin_coiled-coil"/>
</dbReference>
<dbReference type="InterPro" id="IPR015390">
    <property type="entry name" value="Rabaptin_Rab5-bd_dom"/>
</dbReference>
<dbReference type="PANTHER" id="PTHR31179">
    <property type="entry name" value="RAB GTPASE-BINDING EFFECTOR PROTEIN"/>
    <property type="match status" value="1"/>
</dbReference>
<dbReference type="PANTHER" id="PTHR31179:SF6">
    <property type="entry name" value="RAB GTPASE-BINDING EFFECTOR PROTEIN 2"/>
    <property type="match status" value="1"/>
</dbReference>
<dbReference type="Pfam" id="PF09311">
    <property type="entry name" value="Rab5-bind"/>
    <property type="match status" value="2"/>
</dbReference>
<dbReference type="Pfam" id="PF03528">
    <property type="entry name" value="Rabaptin"/>
    <property type="match status" value="1"/>
</dbReference>
<dbReference type="PRINTS" id="PR01432">
    <property type="entry name" value="RABAPTIN"/>
</dbReference>
<dbReference type="SUPFAM" id="SSF103652">
    <property type="entry name" value="G protein-binding domain"/>
    <property type="match status" value="2"/>
</dbReference>
<keyword id="KW-0025">Alternative splicing</keyword>
<keyword id="KW-0966">Cell projection</keyword>
<keyword id="KW-0970">Cilium biogenesis/degradation</keyword>
<keyword id="KW-0175">Coiled coil</keyword>
<keyword id="KW-0963">Cytoplasm</keyword>
<keyword id="KW-0206">Cytoskeleton</keyword>
<keyword id="KW-0254">Endocytosis</keyword>
<keyword id="KW-0967">Endosome</keyword>
<keyword id="KW-0597">Phosphoprotein</keyword>
<keyword id="KW-0653">Protein transport</keyword>
<keyword id="KW-1185">Reference proteome</keyword>
<keyword id="KW-0813">Transport</keyword>
<protein>
    <recommendedName>
        <fullName>Rab GTPase-binding effector protein 2</fullName>
    </recommendedName>
    <alternativeName>
        <fullName>Rabaptin-5beta</fullName>
    </alternativeName>
</protein>
<proteinExistence type="evidence at protein level"/>
<feature type="chain" id="PRO_0000187560" description="Rab GTPase-binding effector protein 2">
    <location>
        <begin position="1"/>
        <end position="554"/>
    </location>
</feature>
<feature type="region of interest" description="Disordered" evidence="4">
    <location>
        <begin position="1"/>
        <end position="28"/>
    </location>
</feature>
<feature type="region of interest" description="Disordered" evidence="4">
    <location>
        <begin position="167"/>
        <end position="208"/>
    </location>
</feature>
<feature type="region of interest" description="Disordered" evidence="4">
    <location>
        <begin position="371"/>
        <end position="395"/>
    </location>
</feature>
<feature type="coiled-coil region" evidence="3">
    <location>
        <begin position="15"/>
        <end position="173"/>
    </location>
</feature>
<feature type="coiled-coil region" evidence="3">
    <location>
        <begin position="274"/>
        <end position="509"/>
    </location>
</feature>
<feature type="compositionally biased region" description="Basic and acidic residues" evidence="4">
    <location>
        <begin position="14"/>
        <end position="28"/>
    </location>
</feature>
<feature type="modified residue" description="Phosphoserine" evidence="1">
    <location>
        <position position="176"/>
    </location>
</feature>
<feature type="modified residue" description="Phosphoserine" evidence="2">
    <location>
        <position position="180"/>
    </location>
</feature>
<feature type="modified residue" description="Phosphoserine" evidence="2">
    <location>
        <position position="187"/>
    </location>
</feature>
<feature type="modified residue" description="Phosphoserine" evidence="2">
    <location>
        <position position="191"/>
    </location>
</feature>
<feature type="splice variant" id="VSP_010460" description="In isoform 2." evidence="5">
    <location>
        <begin position="1"/>
        <end position="43"/>
    </location>
</feature>
<feature type="splice variant" id="VSP_010461" description="In isoform 3." evidence="5">
    <original>AQLTDLLSEQRAKTLRLQAELETSEQVQRDFVRLSQALQVRLERIRQAETLQQVRSILDEAPLRDIRDIKDS</original>
    <variation>VSGAGGLA</variation>
    <location>
        <begin position="483"/>
        <end position="554"/>
    </location>
</feature>